<reference key="1">
    <citation type="journal article" date="1995" name="Gene">
        <title>The orphan G-protein-coupled receptor-encoding gene V28 is closely related to genes for chemokine receptors and is expressed in lymphoid and neural tissues.</title>
        <authorList>
            <person name="Raport C.J."/>
            <person name="Schweickart V.L."/>
            <person name="Eddy R.L. Jr."/>
            <person name="Shows T.B."/>
            <person name="Gray P.W."/>
        </authorList>
    </citation>
    <scope>NUCLEOTIDE SEQUENCE [MRNA] (ISOFORM 1)</scope>
    <scope>TISSUE SPECIFICITY</scope>
</reference>
<reference key="2">
    <citation type="journal article" date="1995" name="DNA Cell Biol.">
        <title>Cloning, chromosomal localization, and RNA expression of a human beta chemokine receptor-like gene.</title>
        <authorList>
            <person name="Combadiere C."/>
            <person name="Ahuja S.K."/>
            <person name="Murphy P.M."/>
        </authorList>
    </citation>
    <scope>NUCLEOTIDE SEQUENCE [MRNA] (ISOFORM 1)</scope>
</reference>
<reference key="3">
    <citation type="journal article" date="2003" name="J. Biol. Chem.">
        <title>Genomic organization and evolution of the CX3CR1/CCR8 chemokine receptor locus.</title>
        <authorList>
            <person name="DeVries M.E."/>
            <person name="Cao H."/>
            <person name="Wang J."/>
            <person name="Xu L."/>
            <person name="Kelvin A.A."/>
            <person name="Ran L."/>
            <person name="Chau L.A."/>
            <person name="Madrenas J."/>
            <person name="Hegele R.A."/>
            <person name="Kelvin D.J."/>
        </authorList>
    </citation>
    <scope>NUCLEOTIDE SEQUENCE [GENOMIC DNA]</scope>
</reference>
<reference key="4">
    <citation type="journal article" date="2004" name="Nat. Genet.">
        <title>Complete sequencing and characterization of 21,243 full-length human cDNAs.</title>
        <authorList>
            <person name="Ota T."/>
            <person name="Suzuki Y."/>
            <person name="Nishikawa T."/>
            <person name="Otsuki T."/>
            <person name="Sugiyama T."/>
            <person name="Irie R."/>
            <person name="Wakamatsu A."/>
            <person name="Hayashi K."/>
            <person name="Sato H."/>
            <person name="Nagai K."/>
            <person name="Kimura K."/>
            <person name="Makita H."/>
            <person name="Sekine M."/>
            <person name="Obayashi M."/>
            <person name="Nishi T."/>
            <person name="Shibahara T."/>
            <person name="Tanaka T."/>
            <person name="Ishii S."/>
            <person name="Yamamoto J."/>
            <person name="Saito K."/>
            <person name="Kawai Y."/>
            <person name="Isono Y."/>
            <person name="Nakamura Y."/>
            <person name="Nagahari K."/>
            <person name="Murakami K."/>
            <person name="Yasuda T."/>
            <person name="Iwayanagi T."/>
            <person name="Wagatsuma M."/>
            <person name="Shiratori A."/>
            <person name="Sudo H."/>
            <person name="Hosoiri T."/>
            <person name="Kaku Y."/>
            <person name="Kodaira H."/>
            <person name="Kondo H."/>
            <person name="Sugawara M."/>
            <person name="Takahashi M."/>
            <person name="Kanda K."/>
            <person name="Yokoi T."/>
            <person name="Furuya T."/>
            <person name="Kikkawa E."/>
            <person name="Omura Y."/>
            <person name="Abe K."/>
            <person name="Kamihara K."/>
            <person name="Katsuta N."/>
            <person name="Sato K."/>
            <person name="Tanikawa M."/>
            <person name="Yamazaki M."/>
            <person name="Ninomiya K."/>
            <person name="Ishibashi T."/>
            <person name="Yamashita H."/>
            <person name="Murakawa K."/>
            <person name="Fujimori K."/>
            <person name="Tanai H."/>
            <person name="Kimata M."/>
            <person name="Watanabe M."/>
            <person name="Hiraoka S."/>
            <person name="Chiba Y."/>
            <person name="Ishida S."/>
            <person name="Ono Y."/>
            <person name="Takiguchi S."/>
            <person name="Watanabe S."/>
            <person name="Yosida M."/>
            <person name="Hotuta T."/>
            <person name="Kusano J."/>
            <person name="Kanehori K."/>
            <person name="Takahashi-Fujii A."/>
            <person name="Hara H."/>
            <person name="Tanase T.-O."/>
            <person name="Nomura Y."/>
            <person name="Togiya S."/>
            <person name="Komai F."/>
            <person name="Hara R."/>
            <person name="Takeuchi K."/>
            <person name="Arita M."/>
            <person name="Imose N."/>
            <person name="Musashino K."/>
            <person name="Yuuki H."/>
            <person name="Oshima A."/>
            <person name="Sasaki N."/>
            <person name="Aotsuka S."/>
            <person name="Yoshikawa Y."/>
            <person name="Matsunawa H."/>
            <person name="Ichihara T."/>
            <person name="Shiohata N."/>
            <person name="Sano S."/>
            <person name="Moriya S."/>
            <person name="Momiyama H."/>
            <person name="Satoh N."/>
            <person name="Takami S."/>
            <person name="Terashima Y."/>
            <person name="Suzuki O."/>
            <person name="Nakagawa S."/>
            <person name="Senoh A."/>
            <person name="Mizoguchi H."/>
            <person name="Goto Y."/>
            <person name="Shimizu F."/>
            <person name="Wakebe H."/>
            <person name="Hishigaki H."/>
            <person name="Watanabe T."/>
            <person name="Sugiyama A."/>
            <person name="Takemoto M."/>
            <person name="Kawakami B."/>
            <person name="Yamazaki M."/>
            <person name="Watanabe K."/>
            <person name="Kumagai A."/>
            <person name="Itakura S."/>
            <person name="Fukuzumi Y."/>
            <person name="Fujimori Y."/>
            <person name="Komiyama M."/>
            <person name="Tashiro H."/>
            <person name="Tanigami A."/>
            <person name="Fujiwara T."/>
            <person name="Ono T."/>
            <person name="Yamada K."/>
            <person name="Fujii Y."/>
            <person name="Ozaki K."/>
            <person name="Hirao M."/>
            <person name="Ohmori Y."/>
            <person name="Kawabata A."/>
            <person name="Hikiji T."/>
            <person name="Kobatake N."/>
            <person name="Inagaki H."/>
            <person name="Ikema Y."/>
            <person name="Okamoto S."/>
            <person name="Okitani R."/>
            <person name="Kawakami T."/>
            <person name="Noguchi S."/>
            <person name="Itoh T."/>
            <person name="Shigeta K."/>
            <person name="Senba T."/>
            <person name="Matsumura K."/>
            <person name="Nakajima Y."/>
            <person name="Mizuno T."/>
            <person name="Morinaga M."/>
            <person name="Sasaki M."/>
            <person name="Togashi T."/>
            <person name="Oyama M."/>
            <person name="Hata H."/>
            <person name="Watanabe M."/>
            <person name="Komatsu T."/>
            <person name="Mizushima-Sugano J."/>
            <person name="Satoh T."/>
            <person name="Shirai Y."/>
            <person name="Takahashi Y."/>
            <person name="Nakagawa K."/>
            <person name="Okumura K."/>
            <person name="Nagase T."/>
            <person name="Nomura N."/>
            <person name="Kikuchi H."/>
            <person name="Masuho Y."/>
            <person name="Yamashita R."/>
            <person name="Nakai K."/>
            <person name="Yada T."/>
            <person name="Nakamura Y."/>
            <person name="Ohara O."/>
            <person name="Isogai T."/>
            <person name="Sugano S."/>
        </authorList>
    </citation>
    <scope>NUCLEOTIDE SEQUENCE [LARGE SCALE MRNA] (ISOFORM 1)</scope>
    <scope>NUCLEOTIDE SEQUENCE [LARGE SCALE MRNA] OF 8-185 (ISOFORM 4)</scope>
    <scope>VARIANTS ILE-249 AND MET-280</scope>
    <source>
        <tissue>Amygdala</tissue>
        <tissue>Thalamus</tissue>
    </source>
</reference>
<reference key="5">
    <citation type="submission" date="2006-10" db="EMBL/GenBank/DDBJ databases">
        <authorList>
            <person name="Livingston R.J."/>
            <person name="Shaffer T."/>
            <person name="McFarland I."/>
            <person name="Nguyen C.P."/>
            <person name="Stanaway I.B."/>
            <person name="Rajkumar N."/>
            <person name="Johnson E.J."/>
            <person name="da Ponte S.H."/>
            <person name="Willa H."/>
            <person name="Ahearn M.O."/>
            <person name="Bertucci C."/>
            <person name="Acklestad J."/>
            <person name="Carroll A."/>
            <person name="Swanson J."/>
            <person name="Gildersleeve H.I."/>
            <person name="Nickerson D.A."/>
        </authorList>
    </citation>
    <scope>NUCLEOTIDE SEQUENCE [GENOMIC DNA]</scope>
</reference>
<reference key="6">
    <citation type="submission" date="2007-06" db="EMBL/GenBank/DDBJ databases">
        <authorList>
            <consortium name="NIEHS SNPs program"/>
        </authorList>
    </citation>
    <scope>NUCLEOTIDE SEQUENCE [GENOMIC DNA]</scope>
    <scope>VARIANTS ASP-13; ILE-249 AND MET-280</scope>
</reference>
<reference key="7">
    <citation type="journal article" date="2006" name="Nature">
        <title>The DNA sequence, annotation and analysis of human chromosome 3.</title>
        <authorList>
            <person name="Muzny D.M."/>
            <person name="Scherer S.E."/>
            <person name="Kaul R."/>
            <person name="Wang J."/>
            <person name="Yu J."/>
            <person name="Sudbrak R."/>
            <person name="Buhay C.J."/>
            <person name="Chen R."/>
            <person name="Cree A."/>
            <person name="Ding Y."/>
            <person name="Dugan-Rocha S."/>
            <person name="Gill R."/>
            <person name="Gunaratne P."/>
            <person name="Harris R.A."/>
            <person name="Hawes A.C."/>
            <person name="Hernandez J."/>
            <person name="Hodgson A.V."/>
            <person name="Hume J."/>
            <person name="Jackson A."/>
            <person name="Khan Z.M."/>
            <person name="Kovar-Smith C."/>
            <person name="Lewis L.R."/>
            <person name="Lozado R.J."/>
            <person name="Metzker M.L."/>
            <person name="Milosavljevic A."/>
            <person name="Miner G.R."/>
            <person name="Morgan M.B."/>
            <person name="Nazareth L.V."/>
            <person name="Scott G."/>
            <person name="Sodergren E."/>
            <person name="Song X.-Z."/>
            <person name="Steffen D."/>
            <person name="Wei S."/>
            <person name="Wheeler D.A."/>
            <person name="Wright M.W."/>
            <person name="Worley K.C."/>
            <person name="Yuan Y."/>
            <person name="Zhang Z."/>
            <person name="Adams C.Q."/>
            <person name="Ansari-Lari M.A."/>
            <person name="Ayele M."/>
            <person name="Brown M.J."/>
            <person name="Chen G."/>
            <person name="Chen Z."/>
            <person name="Clendenning J."/>
            <person name="Clerc-Blankenburg K.P."/>
            <person name="Chen R."/>
            <person name="Chen Z."/>
            <person name="Davis C."/>
            <person name="Delgado O."/>
            <person name="Dinh H.H."/>
            <person name="Dong W."/>
            <person name="Draper H."/>
            <person name="Ernst S."/>
            <person name="Fu G."/>
            <person name="Gonzalez-Garay M.L."/>
            <person name="Garcia D.K."/>
            <person name="Gillett W."/>
            <person name="Gu J."/>
            <person name="Hao B."/>
            <person name="Haugen E."/>
            <person name="Havlak P."/>
            <person name="He X."/>
            <person name="Hennig S."/>
            <person name="Hu S."/>
            <person name="Huang W."/>
            <person name="Jackson L.R."/>
            <person name="Jacob L.S."/>
            <person name="Kelly S.H."/>
            <person name="Kube M."/>
            <person name="Levy R."/>
            <person name="Li Z."/>
            <person name="Liu B."/>
            <person name="Liu J."/>
            <person name="Liu W."/>
            <person name="Lu J."/>
            <person name="Maheshwari M."/>
            <person name="Nguyen B.-V."/>
            <person name="Okwuonu G.O."/>
            <person name="Palmeiri A."/>
            <person name="Pasternak S."/>
            <person name="Perez L.M."/>
            <person name="Phelps K.A."/>
            <person name="Plopper F.J."/>
            <person name="Qiang B."/>
            <person name="Raymond C."/>
            <person name="Rodriguez R."/>
            <person name="Saenphimmachak C."/>
            <person name="Santibanez J."/>
            <person name="Shen H."/>
            <person name="Shen Y."/>
            <person name="Subramanian S."/>
            <person name="Tabor P.E."/>
            <person name="Verduzco D."/>
            <person name="Waldron L."/>
            <person name="Wang J."/>
            <person name="Wang J."/>
            <person name="Wang Q."/>
            <person name="Williams G.A."/>
            <person name="Wong G.K.-S."/>
            <person name="Yao Z."/>
            <person name="Zhang J."/>
            <person name="Zhang X."/>
            <person name="Zhao G."/>
            <person name="Zhou J."/>
            <person name="Zhou Y."/>
            <person name="Nelson D."/>
            <person name="Lehrach H."/>
            <person name="Reinhardt R."/>
            <person name="Naylor S.L."/>
            <person name="Yang H."/>
            <person name="Olson M."/>
            <person name="Weinstock G."/>
            <person name="Gibbs R.A."/>
        </authorList>
    </citation>
    <scope>NUCLEOTIDE SEQUENCE [LARGE SCALE GENOMIC DNA]</scope>
</reference>
<reference key="8">
    <citation type="submission" date="2005-07" db="EMBL/GenBank/DDBJ databases">
        <authorList>
            <person name="Mural R.J."/>
            <person name="Istrail S."/>
            <person name="Sutton G.G."/>
            <person name="Florea L."/>
            <person name="Halpern A.L."/>
            <person name="Mobarry C.M."/>
            <person name="Lippert R."/>
            <person name="Walenz B."/>
            <person name="Shatkay H."/>
            <person name="Dew I."/>
            <person name="Miller J.R."/>
            <person name="Flanigan M.J."/>
            <person name="Edwards N.J."/>
            <person name="Bolanos R."/>
            <person name="Fasulo D."/>
            <person name="Halldorsson B.V."/>
            <person name="Hannenhalli S."/>
            <person name="Turner R."/>
            <person name="Yooseph S."/>
            <person name="Lu F."/>
            <person name="Nusskern D.R."/>
            <person name="Shue B.C."/>
            <person name="Zheng X.H."/>
            <person name="Zhong F."/>
            <person name="Delcher A.L."/>
            <person name="Huson D.H."/>
            <person name="Kravitz S.A."/>
            <person name="Mouchard L."/>
            <person name="Reinert K."/>
            <person name="Remington K.A."/>
            <person name="Clark A.G."/>
            <person name="Waterman M.S."/>
            <person name="Eichler E.E."/>
            <person name="Adams M.D."/>
            <person name="Hunkapiller M.W."/>
            <person name="Myers E.W."/>
            <person name="Venter J.C."/>
        </authorList>
    </citation>
    <scope>NUCLEOTIDE SEQUENCE [LARGE SCALE GENOMIC DNA]</scope>
</reference>
<reference key="9">
    <citation type="journal article" date="2004" name="Genome Res.">
        <title>The status, quality, and expansion of the NIH full-length cDNA project: the Mammalian Gene Collection (MGC).</title>
        <authorList>
            <consortium name="The MGC Project Team"/>
        </authorList>
    </citation>
    <scope>NUCLEOTIDE SEQUENCE [LARGE SCALE MRNA] (ISOFORM 1)</scope>
    <source>
        <tissue>Blood</tissue>
    </source>
</reference>
<reference key="10">
    <citation type="journal article" date="1997" name="Cell">
        <title>Identification and molecular characterization of fractalkine receptor CX3CR1, which mediates both leukocyte migration and adhesion.</title>
        <authorList>
            <person name="Imai T."/>
            <person name="Hieshima K."/>
            <person name="Haskell C."/>
            <person name="Baba M."/>
            <person name="Nagira M."/>
            <person name="Nishimura M."/>
            <person name="Kakizaki M."/>
            <person name="Takagi S."/>
            <person name="Nomiyama H."/>
            <person name="Schall T.J."/>
            <person name="Yoshie O."/>
        </authorList>
    </citation>
    <scope>FUNCTION</scope>
    <scope>SUBCELLULAR LOCATION</scope>
</reference>
<reference key="11">
    <citation type="journal article" date="1998" name="J. Exp. Med.">
        <title>Fractalkine and CX3CR1 mediate a novel mechanism of leukocyte capture, firm adhesion, and activation under physiologic flow.</title>
        <authorList>
            <person name="Fong A.M."/>
            <person name="Robinson L.A."/>
            <person name="Steeber D.A."/>
            <person name="Tedder T.F."/>
            <person name="Yoshie O."/>
            <person name="Imai T."/>
            <person name="Patel D.D."/>
        </authorList>
    </citation>
    <scope>FUNCTION</scope>
</reference>
<reference key="12">
    <citation type="journal article" date="2001" name="Nat. Immunol.">
        <title>CX3C chemokine mimicry by respiratory syncytial virus G glycoprotein.</title>
        <authorList>
            <person name="Tripp R.A."/>
            <person name="Jones L.P."/>
            <person name="Haynes L.M."/>
            <person name="Zheng H."/>
            <person name="Murphy P.M."/>
            <person name="Anderson L.J."/>
        </authorList>
    </citation>
    <scope>INTERACTION WITH HRSV PROTEIN G (MICROBIAL INFECTION)</scope>
</reference>
<reference key="13">
    <citation type="journal article" date="2002" name="J. Immunol.">
        <title>Dual functions of fractalkine/CX3C ligand 1 in trafficking of perforin+/granzyme B+ cytotoxic effector lymphocytes that are defined by CX3CR1 expression.</title>
        <authorList>
            <person name="Nishimura M."/>
            <person name="Umehara H."/>
            <person name="Nakayama T."/>
            <person name="Yoneda O."/>
            <person name="Hieshima K."/>
            <person name="Kakizaki M."/>
            <person name="Dohmae N."/>
            <person name="Yoshie O."/>
            <person name="Imai T."/>
        </authorList>
    </citation>
    <scope>FUNCTION</scope>
    <scope>SUBCELLULAR LOCATION</scope>
    <scope>TISSUE SPECIFICITY</scope>
</reference>
<reference key="14">
    <citation type="journal article" date="2003" name="J. Immunol.">
        <title>Two novel fully functional isoforms of CX3CR1 are potent HIV coreceptors.</title>
        <authorList>
            <person name="Garin A."/>
            <person name="Tarantino N."/>
            <person name="Faure S."/>
            <person name="Daoudi M."/>
            <person name="Lecureuil C."/>
            <person name="Bourdais A."/>
            <person name="Debre P."/>
            <person name="Deterre P."/>
            <person name="Combadiere C."/>
        </authorList>
    </citation>
    <scope>FUNCTION (MICROBIAL INFECTION)</scope>
    <scope>ALTERNATIVE SPLICING</scope>
    <scope>CHARACTERIZATION (ISOFORMS 2 AND 3)</scope>
    <scope>FUNCTION (ISOFORMS 2 AND 3)</scope>
</reference>
<reference key="15">
    <citation type="journal article" date="1998" name="J. Biol. Chem.">
        <title>Identification of CX3CR1. A chemotactic receptor for the human CX3C chemokine fractalkine and a fusion coreceptor for HIV-1.</title>
        <authorList>
            <person name="Combadiere C."/>
            <person name="Salzwedel K."/>
            <person name="Smith E.D."/>
            <person name="Tiffany H.L."/>
            <person name="Berger E.A."/>
            <person name="Murphy P.M."/>
        </authorList>
    </citation>
    <scope>FUNCTION (MICROBIAL INFECTION)</scope>
    <scope>INTERACTION WITH HIV-1 PROTEIN GP160 (MICROBIAL INFECTION)</scope>
</reference>
<reference key="16">
    <citation type="journal article" date="2003" name="Circulation">
        <title>Smooth muscle cells in human atherosclerotic plaques express the fractalkine receptor CX3CR1 and undergo chemotaxis to the CX3C chemokine fractalkine (CX3CL1).</title>
        <authorList>
            <person name="Lucas A.D."/>
            <person name="Bursill C."/>
            <person name="Guzik T.J."/>
            <person name="Sadowski J."/>
            <person name="Channon K.M."/>
            <person name="Greaves D.R."/>
        </authorList>
    </citation>
    <scope>FUNCTION</scope>
    <scope>TISSUE SPECIFICITY</scope>
</reference>
<reference key="17">
    <citation type="journal article" date="2009" name="Blood">
        <title>CX3CR1 is required for monocyte homeostasis and atherogenesis by promoting cell survival.</title>
        <authorList>
            <person name="Landsman L."/>
            <person name="Bar-On L."/>
            <person name="Zernecke A."/>
            <person name="Kim K.W."/>
            <person name="Krauthgamer R."/>
            <person name="Shagdarsuren E."/>
            <person name="Lira S.A."/>
            <person name="Weissman I.L."/>
            <person name="Weber C."/>
            <person name="Jung S."/>
        </authorList>
    </citation>
    <scope>FUNCTION</scope>
</reference>
<reference key="18">
    <citation type="journal article" date="2010" name="J. Immunol.">
        <title>Eotaxin-3/CC chemokine ligand 26 is a functional ligand for CX3CR1.</title>
        <authorList>
            <person name="Nakayama T."/>
            <person name="Watanabe Y."/>
            <person name="Oiso N."/>
            <person name="Higuchi T."/>
            <person name="Shigeta A."/>
            <person name="Mizuguchi N."/>
            <person name="Katou F."/>
            <person name="Hashimoto K."/>
            <person name="Kawada A."/>
            <person name="Yoshie O."/>
        </authorList>
    </citation>
    <scope>FUNCTION</scope>
</reference>
<reference key="19">
    <citation type="journal article" date="2012" name="J. Immunol.">
        <title>Integrins alphavbeta3 and alpha4beta1 act as coreceptors for fractalkine, and the integrin-binding defective mutant of fractalkine is an antagonist of CX3CR1.</title>
        <authorList>
            <person name="Fujita M."/>
            <person name="Takada Y.K."/>
            <person name="Takada Y."/>
        </authorList>
    </citation>
    <scope>FUNCTION</scope>
    <scope>BINDING TO CX3CL1</scope>
    <scope>IDENTIFICATION IN A COMPLEX WITH INTEGRINS AND CX3CL1</scope>
</reference>
<reference key="20">
    <citation type="journal article" date="2017" name="Front. Immunol.">
        <title>TGF-beta1 downregulates the expression of CX3CR1 by inducing miR-27a-5p in primary human NK cells.</title>
        <authorList>
            <person name="Regis S."/>
            <person name="Caliendo F."/>
            <person name="Dondero A."/>
            <person name="Casu B."/>
            <person name="Romano F."/>
            <person name="Loiacono F."/>
            <person name="Moretta A."/>
            <person name="Bottino C."/>
            <person name="Castriconi R."/>
        </authorList>
    </citation>
    <scope>SUBCELLULAR LOCATION</scope>
    <scope>INDUCTION</scope>
</reference>
<reference key="21">
    <citation type="journal article" date="2018" name="Science">
        <title>CX3CR1+ mononuclear phagocytes control immunity to intestinal fungi.</title>
        <authorList>
            <person name="Leonardi I."/>
            <person name="Li X."/>
            <person name="Semon A."/>
            <person name="Li D."/>
            <person name="Doron I."/>
            <person name="Putzel G."/>
            <person name="Bar A."/>
            <person name="Prieto D."/>
            <person name="Rescigno M."/>
            <person name="McGovern D.P.B."/>
            <person name="Pla J."/>
            <person name="Iliev I.D."/>
        </authorList>
    </citation>
    <scope>FUNCTION</scope>
    <scope>CHARACTERIZATION OF VARIANT MET-280</scope>
</reference>
<reference key="22">
    <citation type="journal article" date="2000" name="Science">
        <title>Rapid progression to AIDS in HIV+ individuals with a structural variant of the chemokine receptor CX3CR1.</title>
        <authorList>
            <person name="Faure S."/>
            <person name="Meyer L."/>
            <person name="Costagliola D."/>
            <person name="Vaneensberghe C."/>
            <person name="Genin E."/>
            <person name="Autran B."/>
            <person name="Delfraissy J.-F."/>
            <person name="McDermott D.H."/>
            <person name="Murphy P.M."/>
            <person name="Debre P."/>
            <person name="Theodorou I."/>
            <person name="Combadiere C."/>
        </authorList>
    </citation>
    <scope>VARIANTS ALA-57; ILE-122; ILE-249 AND MET-280</scope>
</reference>
<reference key="23">
    <citation type="journal article" date="2001" name="Blood">
        <title>Polymorphism in the fractalkine receptor CX3CR1 as a genetic risk factor for coronary artery disease.</title>
        <authorList>
            <person name="Moatti D."/>
            <person name="Faure S."/>
            <person name="Fumeron F."/>
            <person name="Amara M.E.-W."/>
            <person name="Seknadji P."/>
            <person name="McDermott D.H."/>
            <person name="Debre P."/>
            <person name="Aumont M.C."/>
            <person name="Murphy P.M."/>
            <person name="de Prost D."/>
            <person name="Combadiere C."/>
        </authorList>
    </citation>
    <scope>VARIANT ILE-249</scope>
</reference>
<reference key="24">
    <citation type="journal article" date="2004" name="FASEB J.">
        <title>The involvement of sequence variation and expression of CX3CR1 in the pathogenesis of age-related macular degeneration.</title>
        <authorList>
            <person name="Tuo J."/>
            <person name="Smith B.C."/>
            <person name="Bojanowski C.M."/>
            <person name="Meleth A.D."/>
            <person name="Gery I."/>
            <person name="Csaky K.G."/>
            <person name="Chew E.Y."/>
            <person name="Chan C.C."/>
        </authorList>
    </citation>
    <scope>VARIANTS ILE-249 AND MET-280</scope>
    <scope>ASSOCIATION WITH ARMD12</scope>
</reference>
<reference key="25">
    <citation type="journal article" date="2007" name="J. Clin. Invest.">
        <title>CX3CR1-dependent subretinal microglia cell accumulation is associated with cardinal features of age-related macular degeneration.</title>
        <authorList>
            <person name="Combadiere C."/>
            <person name="Feumi C."/>
            <person name="Raoul W."/>
            <person name="Keller N."/>
            <person name="Rodero M."/>
            <person name="Pezard A."/>
            <person name="Lavalette S."/>
            <person name="Houssier M."/>
            <person name="Jonet L."/>
            <person name="Picard E."/>
            <person name="Debre P."/>
            <person name="Sirinyan M."/>
            <person name="Deterre P."/>
            <person name="Ferroukhi T."/>
            <person name="Cohen S.Y."/>
            <person name="Chauvaud D."/>
            <person name="Jeanny J.C."/>
            <person name="Chemtob S."/>
            <person name="Behar-Cohen F."/>
            <person name="Sennlaub F."/>
        </authorList>
    </citation>
    <scope>CHARACTERIZATION OF VARIANTS ILE-249 AND MET-280</scope>
    <scope>EFFECT ON CHEMOTAXIS OF MONOCYTES OF ARMD12 PATIENTS</scope>
</reference>
<dbReference type="EMBL" id="U20350">
    <property type="protein sequence ID" value="AAA91783.1"/>
    <property type="molecule type" value="mRNA"/>
</dbReference>
<dbReference type="EMBL" id="U28934">
    <property type="protein sequence ID" value="AAA87032.1"/>
    <property type="molecule type" value="mRNA"/>
</dbReference>
<dbReference type="EMBL" id="AY016370">
    <property type="protein sequence ID" value="AAK08627.1"/>
    <property type="molecule type" value="Genomic_DNA"/>
</dbReference>
<dbReference type="EMBL" id="AK312373">
    <property type="protein sequence ID" value="BAG35291.1"/>
    <property type="molecule type" value="mRNA"/>
</dbReference>
<dbReference type="EMBL" id="DA413545">
    <property type="status" value="NOT_ANNOTATED_CDS"/>
    <property type="molecule type" value="mRNA"/>
</dbReference>
<dbReference type="EMBL" id="EF064744">
    <property type="protein sequence ID" value="ABK41927.1"/>
    <property type="molecule type" value="Genomic_DNA"/>
</dbReference>
<dbReference type="EMBL" id="EU006531">
    <property type="protein sequence ID" value="ABS29268.1"/>
    <property type="molecule type" value="Genomic_DNA"/>
</dbReference>
<dbReference type="EMBL" id="AC092053">
    <property type="status" value="NOT_ANNOTATED_CDS"/>
    <property type="molecule type" value="Genomic_DNA"/>
</dbReference>
<dbReference type="EMBL" id="CH471055">
    <property type="protein sequence ID" value="EAW64576.1"/>
    <property type="molecule type" value="Genomic_DNA"/>
</dbReference>
<dbReference type="EMBL" id="BC028078">
    <property type="protein sequence ID" value="AAH28078.1"/>
    <property type="molecule type" value="mRNA"/>
</dbReference>
<dbReference type="CCDS" id="CCDS43069.1">
    <molecule id="P49238-1"/>
</dbReference>
<dbReference type="CCDS" id="CCDS54571.1">
    <molecule id="P49238-4"/>
</dbReference>
<dbReference type="PIR" id="JC4304">
    <property type="entry name" value="JC4304"/>
</dbReference>
<dbReference type="RefSeq" id="NP_001164642.1">
    <molecule id="P49238-1"/>
    <property type="nucleotide sequence ID" value="NM_001171171.2"/>
</dbReference>
<dbReference type="RefSeq" id="NP_001164643.1">
    <molecule id="P49238-1"/>
    <property type="nucleotide sequence ID" value="NM_001171172.2"/>
</dbReference>
<dbReference type="RefSeq" id="NP_001164645.1">
    <molecule id="P49238-4"/>
    <property type="nucleotide sequence ID" value="NM_001171174.1"/>
</dbReference>
<dbReference type="RefSeq" id="NP_001328.1">
    <molecule id="P49238-1"/>
    <property type="nucleotide sequence ID" value="NM_001337.4"/>
</dbReference>
<dbReference type="RefSeq" id="XP_047303494.1">
    <molecule id="P49238-1"/>
    <property type="nucleotide sequence ID" value="XM_047447538.1"/>
</dbReference>
<dbReference type="PDB" id="7XBW">
    <property type="method" value="EM"/>
    <property type="resolution" value="2.80 A"/>
    <property type="chains" value="R=1-315"/>
</dbReference>
<dbReference type="PDB" id="7XBX">
    <property type="method" value="EM"/>
    <property type="resolution" value="3.40 A"/>
    <property type="chains" value="R=2-315"/>
</dbReference>
<dbReference type="PDBsum" id="7XBW"/>
<dbReference type="PDBsum" id="7XBX"/>
<dbReference type="EMDB" id="EMD-33107"/>
<dbReference type="EMDB" id="EMD-33108"/>
<dbReference type="SMR" id="P49238"/>
<dbReference type="BioGRID" id="107904">
    <property type="interactions" value="3"/>
</dbReference>
<dbReference type="DIP" id="DIP-5879N"/>
<dbReference type="FunCoup" id="P49238">
    <property type="interactions" value="662"/>
</dbReference>
<dbReference type="IntAct" id="P49238">
    <property type="interactions" value="4"/>
</dbReference>
<dbReference type="STRING" id="9606.ENSP00000351059"/>
<dbReference type="BindingDB" id="P49238"/>
<dbReference type="ChEMBL" id="CHEMBL4843"/>
<dbReference type="DrugBank" id="DB16511">
    <property type="generic name" value="KAND567"/>
</dbReference>
<dbReference type="GuidetoPHARMACOLOGY" id="74"/>
<dbReference type="iPTMnet" id="P49238"/>
<dbReference type="PhosphoSitePlus" id="P49238"/>
<dbReference type="BioMuta" id="CX3CR1"/>
<dbReference type="DMDM" id="1351394"/>
<dbReference type="MassIVE" id="P49238"/>
<dbReference type="PaxDb" id="9606-ENSP00000351059"/>
<dbReference type="PeptideAtlas" id="P49238"/>
<dbReference type="ProteomicsDB" id="55973">
    <molecule id="P49238-1"/>
</dbReference>
<dbReference type="ProteomicsDB" id="55974">
    <molecule id="P49238-2"/>
</dbReference>
<dbReference type="ProteomicsDB" id="55975">
    <molecule id="P49238-3"/>
</dbReference>
<dbReference type="Antibodypedia" id="6554">
    <property type="antibodies" value="780 antibodies from 45 providers"/>
</dbReference>
<dbReference type="DNASU" id="1524"/>
<dbReference type="Ensembl" id="ENST00000358309.3">
    <molecule id="P49238-4"/>
    <property type="protein sequence ID" value="ENSP00000351059.3"/>
    <property type="gene ID" value="ENSG00000168329.14"/>
</dbReference>
<dbReference type="Ensembl" id="ENST00000399220.3">
    <molecule id="P49238-1"/>
    <property type="protein sequence ID" value="ENSP00000382166.3"/>
    <property type="gene ID" value="ENSG00000168329.14"/>
</dbReference>
<dbReference type="Ensembl" id="ENST00000541347.5">
    <molecule id="P49238-1"/>
    <property type="protein sequence ID" value="ENSP00000439140.1"/>
    <property type="gene ID" value="ENSG00000168329.14"/>
</dbReference>
<dbReference type="Ensembl" id="ENST00000542107.5">
    <molecule id="P49238-1"/>
    <property type="protein sequence ID" value="ENSP00000444928.1"/>
    <property type="gene ID" value="ENSG00000168329.14"/>
</dbReference>
<dbReference type="GeneID" id="1524"/>
<dbReference type="KEGG" id="hsa:1524"/>
<dbReference type="MANE-Select" id="ENST00000399220.3">
    <property type="protein sequence ID" value="ENSP00000382166.3"/>
    <property type="RefSeq nucleotide sequence ID" value="NM_001337.4"/>
    <property type="RefSeq protein sequence ID" value="NP_001328.1"/>
</dbReference>
<dbReference type="UCSC" id="uc003cjl.4">
    <molecule id="P49238-1"/>
    <property type="organism name" value="human"/>
</dbReference>
<dbReference type="AGR" id="HGNC:2558"/>
<dbReference type="CTD" id="1524"/>
<dbReference type="DisGeNET" id="1524"/>
<dbReference type="GeneCards" id="CX3CR1"/>
<dbReference type="HGNC" id="HGNC:2558">
    <property type="gene designation" value="CX3CR1"/>
</dbReference>
<dbReference type="HPA" id="ENSG00000168329">
    <property type="expression patterns" value="Tissue enhanced (brain)"/>
</dbReference>
<dbReference type="MalaCards" id="CX3CR1"/>
<dbReference type="MIM" id="601470">
    <property type="type" value="gene"/>
</dbReference>
<dbReference type="MIM" id="609423">
    <property type="type" value="phenotype"/>
</dbReference>
<dbReference type="MIM" id="613784">
    <property type="type" value="phenotype"/>
</dbReference>
<dbReference type="neXtProt" id="NX_P49238"/>
<dbReference type="OpenTargets" id="ENSG00000168329"/>
<dbReference type="PharmGKB" id="PA27054"/>
<dbReference type="VEuPathDB" id="HostDB:ENSG00000168329"/>
<dbReference type="eggNOG" id="ENOG502QVQK">
    <property type="taxonomic scope" value="Eukaryota"/>
</dbReference>
<dbReference type="GeneTree" id="ENSGT01020000230359"/>
<dbReference type="HOGENOM" id="CLU_009579_8_3_1"/>
<dbReference type="InParanoid" id="P49238"/>
<dbReference type="OMA" id="TDIQEFG"/>
<dbReference type="OrthoDB" id="5981253at2759"/>
<dbReference type="PAN-GO" id="P49238">
    <property type="GO annotations" value="7 GO annotations based on evolutionary models"/>
</dbReference>
<dbReference type="PhylomeDB" id="P49238"/>
<dbReference type="TreeFam" id="TF330966"/>
<dbReference type="PathwayCommons" id="P49238"/>
<dbReference type="Reactome" id="R-HSA-380108">
    <property type="pathway name" value="Chemokine receptors bind chemokines"/>
</dbReference>
<dbReference type="Reactome" id="R-HSA-418594">
    <property type="pathway name" value="G alpha (i) signalling events"/>
</dbReference>
<dbReference type="Reactome" id="R-HSA-9820960">
    <property type="pathway name" value="Respiratory syncytial virus (RSV) attachment and entry"/>
</dbReference>
<dbReference type="Reactome" id="R-HSA-9833110">
    <property type="pathway name" value="RSV-host interactions"/>
</dbReference>
<dbReference type="SignaLink" id="P49238"/>
<dbReference type="SIGNOR" id="P49238"/>
<dbReference type="BioGRID-ORCS" id="1524">
    <property type="hits" value="15 hits in 1136 CRISPR screens"/>
</dbReference>
<dbReference type="ChiTaRS" id="CX3CR1">
    <property type="organism name" value="human"/>
</dbReference>
<dbReference type="GeneWiki" id="CX3CR1"/>
<dbReference type="GenomeRNAi" id="1524"/>
<dbReference type="Pharos" id="P49238">
    <property type="development level" value="Tchem"/>
</dbReference>
<dbReference type="PRO" id="PR:P49238"/>
<dbReference type="Proteomes" id="UP000005640">
    <property type="component" value="Chromosome 3"/>
</dbReference>
<dbReference type="RNAct" id="P49238">
    <property type="molecule type" value="protein"/>
</dbReference>
<dbReference type="Bgee" id="ENSG00000168329">
    <property type="expression patterns" value="Expressed in granulocyte and 176 other cell types or tissues"/>
</dbReference>
<dbReference type="ExpressionAtlas" id="P49238">
    <property type="expression patterns" value="baseline and differential"/>
</dbReference>
<dbReference type="GO" id="GO:0009986">
    <property type="term" value="C:cell surface"/>
    <property type="evidence" value="ECO:0000314"/>
    <property type="project" value="ARUK-UCL"/>
</dbReference>
<dbReference type="GO" id="GO:0097447">
    <property type="term" value="C:dendritic tree"/>
    <property type="evidence" value="ECO:0000250"/>
    <property type="project" value="ARUK-UCL"/>
</dbReference>
<dbReference type="GO" id="GO:0009897">
    <property type="term" value="C:external side of plasma membrane"/>
    <property type="evidence" value="ECO:0000318"/>
    <property type="project" value="GO_Central"/>
</dbReference>
<dbReference type="GO" id="GO:0160056">
    <property type="term" value="C:macropinosome membrane"/>
    <property type="evidence" value="ECO:0000304"/>
    <property type="project" value="Reactome"/>
</dbReference>
<dbReference type="GO" id="GO:0043005">
    <property type="term" value="C:neuron projection"/>
    <property type="evidence" value="ECO:0000250"/>
    <property type="project" value="ARUK-UCL"/>
</dbReference>
<dbReference type="GO" id="GO:0032809">
    <property type="term" value="C:neuronal cell body membrane"/>
    <property type="evidence" value="ECO:0000250"/>
    <property type="project" value="ARUK-UCL"/>
</dbReference>
<dbReference type="GO" id="GO:0048471">
    <property type="term" value="C:perinuclear region of cytoplasm"/>
    <property type="evidence" value="ECO:0000250"/>
    <property type="project" value="ARUK-UCL"/>
</dbReference>
<dbReference type="GO" id="GO:0005886">
    <property type="term" value="C:plasma membrane"/>
    <property type="evidence" value="ECO:0000314"/>
    <property type="project" value="HPA"/>
</dbReference>
<dbReference type="GO" id="GO:0019957">
    <property type="term" value="F:C-C chemokine binding"/>
    <property type="evidence" value="ECO:0000318"/>
    <property type="project" value="GO_Central"/>
</dbReference>
<dbReference type="GO" id="GO:0016493">
    <property type="term" value="F:C-C chemokine receptor activity"/>
    <property type="evidence" value="ECO:0000318"/>
    <property type="project" value="GO_Central"/>
</dbReference>
<dbReference type="GO" id="GO:0019960">
    <property type="term" value="F:C-X3-C chemokine binding"/>
    <property type="evidence" value="ECO:0000314"/>
    <property type="project" value="UniProtKB"/>
</dbReference>
<dbReference type="GO" id="GO:0016495">
    <property type="term" value="F:C-X3-C chemokine receptor activity"/>
    <property type="evidence" value="ECO:0000314"/>
    <property type="project" value="UniProtKB"/>
</dbReference>
<dbReference type="GO" id="GO:0004950">
    <property type="term" value="F:chemokine receptor activity"/>
    <property type="evidence" value="ECO:0000304"/>
    <property type="project" value="ProtInc"/>
</dbReference>
<dbReference type="GO" id="GO:0031737">
    <property type="term" value="F:CX3C chemokine receptor binding"/>
    <property type="evidence" value="ECO:0000314"/>
    <property type="project" value="UniProtKB"/>
</dbReference>
<dbReference type="GO" id="GO:0008528">
    <property type="term" value="F:G protein-coupled peptide receptor activity"/>
    <property type="evidence" value="ECO:0000304"/>
    <property type="project" value="ARUK-UCL"/>
</dbReference>
<dbReference type="GO" id="GO:0004930">
    <property type="term" value="F:G protein-coupled receptor activity"/>
    <property type="evidence" value="ECO:0000250"/>
    <property type="project" value="ARUK-UCL"/>
</dbReference>
<dbReference type="GO" id="GO:0002250">
    <property type="term" value="P:adaptive immune response"/>
    <property type="evidence" value="ECO:0000250"/>
    <property type="project" value="UniProtKB"/>
</dbReference>
<dbReference type="GO" id="GO:0061760">
    <property type="term" value="P:antifungal innate immune response"/>
    <property type="evidence" value="ECO:0000315"/>
    <property type="project" value="UniProtKB"/>
</dbReference>
<dbReference type="GO" id="GO:0035425">
    <property type="term" value="P:autocrine signaling"/>
    <property type="evidence" value="ECO:0000250"/>
    <property type="project" value="ARUK-UCL"/>
</dbReference>
<dbReference type="GO" id="GO:0007420">
    <property type="term" value="P:brain development"/>
    <property type="evidence" value="ECO:0000250"/>
    <property type="project" value="UniProtKB"/>
</dbReference>
<dbReference type="GO" id="GO:0019722">
    <property type="term" value="P:calcium-mediated signaling"/>
    <property type="evidence" value="ECO:0000318"/>
    <property type="project" value="GO_Central"/>
</dbReference>
<dbReference type="GO" id="GO:0007155">
    <property type="term" value="P:cell adhesion"/>
    <property type="evidence" value="ECO:0000314"/>
    <property type="project" value="UniProtKB"/>
</dbReference>
<dbReference type="GO" id="GO:0060326">
    <property type="term" value="P:cell chemotaxis"/>
    <property type="evidence" value="ECO:0000318"/>
    <property type="project" value="GO_Central"/>
</dbReference>
<dbReference type="GO" id="GO:0007267">
    <property type="term" value="P:cell-cell signaling"/>
    <property type="evidence" value="ECO:0000304"/>
    <property type="project" value="ARUK-UCL"/>
</dbReference>
<dbReference type="GO" id="GO:0006968">
    <property type="term" value="P:cellular defense response"/>
    <property type="evidence" value="ECO:0000304"/>
    <property type="project" value="ProtInc"/>
</dbReference>
<dbReference type="GO" id="GO:0071222">
    <property type="term" value="P:cellular response to lipopolysaccharide"/>
    <property type="evidence" value="ECO:0000250"/>
    <property type="project" value="ARUK-UCL"/>
</dbReference>
<dbReference type="GO" id="GO:0021626">
    <property type="term" value="P:central nervous system maturation"/>
    <property type="evidence" value="ECO:0000250"/>
    <property type="project" value="ARUK-UCL"/>
</dbReference>
<dbReference type="GO" id="GO:0006935">
    <property type="term" value="P:chemotaxis"/>
    <property type="evidence" value="ECO:0000316"/>
    <property type="project" value="ARUK-UCL"/>
</dbReference>
<dbReference type="GO" id="GO:0007186">
    <property type="term" value="P:G protein-coupled receptor signaling pathway"/>
    <property type="evidence" value="ECO:0000304"/>
    <property type="project" value="ProtInc"/>
</dbReference>
<dbReference type="GO" id="GO:0048874">
    <property type="term" value="P:host-mediated regulation of intestinal microbiota composition"/>
    <property type="evidence" value="ECO:0000250"/>
    <property type="project" value="UniProtKB"/>
</dbReference>
<dbReference type="GO" id="GO:0006955">
    <property type="term" value="P:immune response"/>
    <property type="evidence" value="ECO:0000250"/>
    <property type="project" value="UniProtKB"/>
</dbReference>
<dbReference type="GO" id="GO:0045087">
    <property type="term" value="P:innate immune response"/>
    <property type="evidence" value="ECO:0000305"/>
    <property type="project" value="ARUK-UCL"/>
</dbReference>
<dbReference type="GO" id="GO:0030595">
    <property type="term" value="P:leukocyte chemotaxis"/>
    <property type="evidence" value="ECO:0000250"/>
    <property type="project" value="UniProtKB"/>
</dbReference>
<dbReference type="GO" id="GO:0050901">
    <property type="term" value="P:leukocyte tethering or rolling"/>
    <property type="evidence" value="ECO:0000250"/>
    <property type="project" value="ARUK-UCL"/>
</dbReference>
<dbReference type="GO" id="GO:0002282">
    <property type="term" value="P:microglial cell activation involved in immune response"/>
    <property type="evidence" value="ECO:0000250"/>
    <property type="project" value="UniProtKB"/>
</dbReference>
<dbReference type="GO" id="GO:0050804">
    <property type="term" value="P:modulation of chemical synaptic transmission"/>
    <property type="evidence" value="ECO:0000250"/>
    <property type="project" value="ARUK-UCL"/>
</dbReference>
<dbReference type="GO" id="GO:0150090">
    <property type="term" value="P:multiple spine synapse organization, single dendrite"/>
    <property type="evidence" value="ECO:0000250"/>
    <property type="project" value="ARUK-UCL"/>
</dbReference>
<dbReference type="GO" id="GO:0016525">
    <property type="term" value="P:negative regulation of angiogenesis"/>
    <property type="evidence" value="ECO:0007669"/>
    <property type="project" value="Ensembl"/>
</dbReference>
<dbReference type="GO" id="GO:2001234">
    <property type="term" value="P:negative regulation of apoptotic signaling pathway"/>
    <property type="evidence" value="ECO:0000250"/>
    <property type="project" value="ARUK-UCL"/>
</dbReference>
<dbReference type="GO" id="GO:0110091">
    <property type="term" value="P:negative regulation of hippocampal neuron apoptotic process"/>
    <property type="evidence" value="ECO:0000250"/>
    <property type="project" value="ARUK-UCL"/>
</dbReference>
<dbReference type="GO" id="GO:0032691">
    <property type="term" value="P:negative regulation of interleukin-1 beta production"/>
    <property type="evidence" value="ECO:0000250"/>
    <property type="project" value="ARUK-UCL"/>
</dbReference>
<dbReference type="GO" id="GO:1904150">
    <property type="term" value="P:negative regulation of microglial cell mediated cytotoxicity"/>
    <property type="evidence" value="ECO:0000250"/>
    <property type="project" value="UniProtKB"/>
</dbReference>
<dbReference type="GO" id="GO:0007200">
    <property type="term" value="P:phospholipase C-activating G protein-coupled receptor signaling pathway"/>
    <property type="evidence" value="ECO:0000250"/>
    <property type="project" value="ARUK-UCL"/>
</dbReference>
<dbReference type="GO" id="GO:0043123">
    <property type="term" value="P:positive regulation of canonical NF-kappaB signal transduction"/>
    <property type="evidence" value="ECO:0000250"/>
    <property type="project" value="ARUK-UCL"/>
</dbReference>
<dbReference type="GO" id="GO:0007204">
    <property type="term" value="P:positive regulation of cytosolic calcium ion concentration"/>
    <property type="evidence" value="ECO:0000318"/>
    <property type="project" value="GO_Central"/>
</dbReference>
<dbReference type="GO" id="GO:0090026">
    <property type="term" value="P:positive regulation of monocyte chemotaxis"/>
    <property type="evidence" value="ECO:0007669"/>
    <property type="project" value="Ensembl"/>
</dbReference>
<dbReference type="GO" id="GO:0002052">
    <property type="term" value="P:positive regulation of neuroblast proliferation"/>
    <property type="evidence" value="ECO:0000250"/>
    <property type="project" value="ARUK-UCL"/>
</dbReference>
<dbReference type="GO" id="GO:0050769">
    <property type="term" value="P:positive regulation of neurogenesis"/>
    <property type="evidence" value="ECO:0000250"/>
    <property type="project" value="ARUK-UCL"/>
</dbReference>
<dbReference type="GO" id="GO:0051897">
    <property type="term" value="P:positive regulation of phosphatidylinositol 3-kinase/protein kinase B signal transduction"/>
    <property type="evidence" value="ECO:0000250"/>
    <property type="project" value="ARUK-UCL"/>
</dbReference>
<dbReference type="GO" id="GO:1904139">
    <property type="term" value="P:regulation of microglial cell migration"/>
    <property type="evidence" value="ECO:0000304"/>
    <property type="project" value="ARUK-UCL"/>
</dbReference>
<dbReference type="GO" id="GO:0050767">
    <property type="term" value="P:regulation of neurogenesis"/>
    <property type="evidence" value="ECO:0000304"/>
    <property type="project" value="ARUK-UCL"/>
</dbReference>
<dbReference type="GO" id="GO:0045428">
    <property type="term" value="P:regulation of nitric oxide biosynthetic process"/>
    <property type="evidence" value="ECO:0000250"/>
    <property type="project" value="ARUK-UCL"/>
</dbReference>
<dbReference type="GO" id="GO:0048167">
    <property type="term" value="P:regulation of synaptic plasticity"/>
    <property type="evidence" value="ECO:0000304"/>
    <property type="project" value="ARUK-UCL"/>
</dbReference>
<dbReference type="GO" id="GO:0032680">
    <property type="term" value="P:regulation of tumor necrosis factor production"/>
    <property type="evidence" value="ECO:0000250"/>
    <property type="project" value="ARUK-UCL"/>
</dbReference>
<dbReference type="GO" id="GO:0002931">
    <property type="term" value="P:response to ischemia"/>
    <property type="evidence" value="ECO:0000250"/>
    <property type="project" value="ARUK-UCL"/>
</dbReference>
<dbReference type="GO" id="GO:0009611">
    <property type="term" value="P:response to wounding"/>
    <property type="evidence" value="ECO:0000304"/>
    <property type="project" value="ProtInc"/>
</dbReference>
<dbReference type="GO" id="GO:0035176">
    <property type="term" value="P:social behavior"/>
    <property type="evidence" value="ECO:0000250"/>
    <property type="project" value="ARUK-UCL"/>
</dbReference>
<dbReference type="GO" id="GO:0060074">
    <property type="term" value="P:synapse maturation"/>
    <property type="evidence" value="ECO:0000250"/>
    <property type="project" value="ARUK-UCL"/>
</dbReference>
<dbReference type="GO" id="GO:0098883">
    <property type="term" value="P:synapse pruning"/>
    <property type="evidence" value="ECO:0000250"/>
    <property type="project" value="UniProtKB"/>
</dbReference>
<dbReference type="CDD" id="cd15186">
    <property type="entry name" value="7tmA_CX3CR1"/>
    <property type="match status" value="1"/>
</dbReference>
<dbReference type="FunFam" id="1.20.1070.10:FF:000026">
    <property type="entry name" value="C-C chemokine receptor type 5"/>
    <property type="match status" value="1"/>
</dbReference>
<dbReference type="Gene3D" id="1.20.1070.10">
    <property type="entry name" value="Rhodopsin 7-helix transmembrane proteins"/>
    <property type="match status" value="1"/>
</dbReference>
<dbReference type="InterPro" id="IPR050119">
    <property type="entry name" value="CCR1-9-like"/>
</dbReference>
<dbReference type="InterPro" id="IPR005387">
    <property type="entry name" value="Chemokine_CX3CR1"/>
</dbReference>
<dbReference type="InterPro" id="IPR000276">
    <property type="entry name" value="GPCR_Rhodpsn"/>
</dbReference>
<dbReference type="InterPro" id="IPR017452">
    <property type="entry name" value="GPCR_Rhodpsn_7TM"/>
</dbReference>
<dbReference type="PANTHER" id="PTHR10489">
    <property type="entry name" value="CELL ADHESION MOLECULE"/>
    <property type="match status" value="1"/>
</dbReference>
<dbReference type="PANTHER" id="PTHR10489:SF955">
    <property type="entry name" value="CX3C CHEMOKINE RECEPTOR 1"/>
    <property type="match status" value="1"/>
</dbReference>
<dbReference type="Pfam" id="PF00001">
    <property type="entry name" value="7tm_1"/>
    <property type="match status" value="1"/>
</dbReference>
<dbReference type="PRINTS" id="PR01562">
    <property type="entry name" value="FRACTALKINER"/>
</dbReference>
<dbReference type="PRINTS" id="PR00237">
    <property type="entry name" value="GPCRRHODOPSN"/>
</dbReference>
<dbReference type="SUPFAM" id="SSF81321">
    <property type="entry name" value="Family A G protein-coupled receptor-like"/>
    <property type="match status" value="1"/>
</dbReference>
<dbReference type="PROSITE" id="PS00237">
    <property type="entry name" value="G_PROTEIN_RECEP_F1_1"/>
    <property type="match status" value="1"/>
</dbReference>
<dbReference type="PROSITE" id="PS50262">
    <property type="entry name" value="G_PROTEIN_RECEP_F1_2"/>
    <property type="match status" value="1"/>
</dbReference>
<sequence length="355" mass="40396">MDQFPESVTENFEYDDLAEACYIGDIVVFGTVFLSIFYSVIFAIGLVGNLLVVFALTNSKKPKSVTDIYLLNLALSDLLFVATLPFWTHYLINEKGLHNAMCKFTTAFFFIGFFGSIFFITVISIDRYLAIVLAANSMNNRTVQHGVTISLGVWAAAILVAAPQFMFTKQKENECLGDYPEVLQEIWPVLRNVETNFLGFLLPLLIMSYCYFRIIQTLFSCKNHKKAKAIKLILLVVIVFFLFWTPYNVMIFLETLKLYDFFPSCDMRKDLRLALSVTETVAFSHCCLNPLIYAFAGEKFRRYLYHLYGKCLAVLCGRSVHVDFSSSESQRSRHGSVLSSNFTYHTSDGDALLLL</sequence>
<comment type="function">
    <text evidence="2 8 9 14 15 16 18 20 22">Receptor for the C-X3-C chemokine fractalkine (CX3CL1) present on many early leukocyte cells; CX3CR1-CX3CL1 signaling exerts distinct functions in different tissue compartments, such as immune response, inflammation, cell adhesion and chemotaxis (PubMed:12055230, PubMed:23125415, PubMed:9390561, PubMed:9782118). CX3CR1-CX3CL1 signaling mediates cell migratory functions (By similarity). Responsible for the recruitment of natural killer (NK) cells to inflamed tissues (By similarity). Acts as a regulator of inflammation process leading to atherogenesis by mediating macrophage and monocyte recruitment to inflamed atherosclerotic plaques, promoting cell survival (By similarity). Involved in airway inflammation by promoting interleukin 2-producing T helper (Th2) cell survival in inflamed lung (By similarity). Involved in the migration of circulating monocytes to non-inflamed tissues, where they differentiate into macrophages and dendritic cells (By similarity). Acts as a negative regulator of angiogenesis, probably by promoting macrophage chemotaxis (PubMed:14581400, PubMed:18971423). Plays a key role in brain microglia by regulating inflammatory response in the central nervous system (CNS) and regulating synapse maturation (By similarity). Required to restrain the microglial inflammatory response in the CNS and the resulting parenchymal damage in response to pathological stimuli (By similarity). Involved in brain development by participating in synaptic pruning, a natural process during which brain microglia eliminates extra synapses during postnatal development (By similarity). Synaptic pruning by microglia is required to promote the maturation of circuit connectivity during brain development (By similarity). Acts as an important regulator of the gut microbiota by controlling immunity to intestinal bacteria and fungi (By similarity). Expressed in lamina propria dendritic cells in the small intestine, which form transepithelial dendrites capable of taking up bacteria in order to provide defense against pathogenic bacteria (By similarity). Required to initiate innate and adaptive immune responses against dissemination of commensal fungi (mycobiota) component of the gut: expressed in mononuclear phagocytes (MNPs) and acts by promoting induction of antifungal IgG antibodies response to confer protection against disseminated C.albicans or C.auris infection (PubMed:29326275). Also acts as a receptor for C-C motif chemokine CCL26, inducing cell chemotaxis (PubMed:20974991).</text>
</comment>
<comment type="function">
    <molecule>Isoform 1</molecule>
    <text evidence="10 21">(Microbial infection) Acts as a coreceptor with CD4 for HIV-1 virus envelope protein.</text>
</comment>
<comment type="function">
    <molecule>Isoform 2</molecule>
    <text evidence="10">(Microbial infection) Acts as a coreceptor with CD4 for HIV-1 virus envelope protein (PubMed:14607932). May have more potent HIV-1 coreceptothr activity than isoform 1 (PubMed:14607932).</text>
</comment>
<comment type="function">
    <molecule>Isoform 3</molecule>
    <text evidence="10">(Microbial infection) Acts as a coreceptor with CD4 for HIV-1 virus envelope protein (PubMed:14607932). May have more potent HIV-1 coreceptor activity than isoform 1 (PubMed:14607932).</text>
</comment>
<comment type="subunit">
    <text evidence="16">Found in a ternary complex with CX3CL1 and ITGAV:ITGB3 or ITGA4:ITGB1.</text>
</comment>
<comment type="subunit">
    <text evidence="7">(Microbial infection) Interacts with human respiratory syncytial virus (HRSV) protein G; this interaction modulates host immune response.</text>
</comment>
<comment type="subunit">
    <text evidence="21">(Microbial infection) Interacts with HIV-1 envelope polyprotein gp160.</text>
</comment>
<comment type="interaction">
    <interactant intactId="EBI-13049264">
        <id>P49238-4</id>
    </interactant>
    <interactant intactId="EBI-9083477">
        <id>Q9P0B6</id>
        <label>CCDC167</label>
    </interactant>
    <organismsDiffer>false</organismsDiffer>
    <experiments>3</experiments>
</comment>
<comment type="subcellular location">
    <subcellularLocation>
        <location evidence="8 17 20">Cell membrane</location>
        <topology evidence="3">Multi-pass membrane protein</topology>
    </subcellularLocation>
</comment>
<comment type="alternative products">
    <event type="alternative splicing"/>
    <isoform>
        <id>P49238-1</id>
        <name>1</name>
        <sequence type="displayed"/>
    </isoform>
    <isoform>
        <id>P49238-2</id>
        <name>2</name>
        <sequence type="described" ref="VSP_009681"/>
    </isoform>
    <isoform>
        <id>P49238-3</id>
        <name>3</name>
        <sequence type="described" ref="VSP_009682"/>
    </isoform>
    <isoform>
        <id>P49238-4</id>
        <name>4</name>
        <sequence type="described" ref="VSP_044595"/>
    </isoform>
</comment>
<comment type="tissue specificity">
    <text evidence="8 9 19">Expressed in lymphoid and neural tissues (PubMed:7590284). Expressed in lymphocyte subsets, such as natural killer (NK) cells, gamma-delta T-cells and terminally differentiated CD8(+) T-cells (PubMed:12055230). Expressed in smooth muscle cells in atherosclerotic plaques (PubMed:14581400).</text>
</comment>
<comment type="induction">
    <text evidence="17">Expression is down-regulated by miR-27a-5p microRNA in natural killer (NK) cell lymphocytes in response to TGF-beta1.</text>
</comment>
<comment type="PTM">
    <text evidence="1">This protein is not N-glycosylated which is unusual for G-protein-coupled receptors.</text>
</comment>
<comment type="polymorphism">
    <text evidence="5">Variations in CX3CR1 are associated with rapid progression to AIDS [MIM:609423]. Increased susceptibility to HIV infection and rapid progression to AIDS are associated with the Ile-249/Met-280 haplotype.</text>
</comment>
<comment type="disease" evidence="12">
    <disease id="DI-03063">
        <name>Macular degeneration, age-related, 12</name>
        <acronym>ARMD12</acronym>
        <description>A form of age-related macular degeneration, a multifactorial eye disease and the most common cause of irreversible vision loss in the developed world. In most patients, the disease is manifest as ophthalmoscopically visible yellowish accumulations of protein and lipid that lie beneath the retinal pigment epithelium and within an elastin-containing structure known as Bruch membrane.</description>
        <dbReference type="MIM" id="613784"/>
    </disease>
    <text>Disease susceptibility is associated with variants affecting the gene represented in this entry.</text>
</comment>
<comment type="similarity">
    <text evidence="4">Belongs to the G-protein coupled receptor 1 family.</text>
</comment>
<organism>
    <name type="scientific">Homo sapiens</name>
    <name type="common">Human</name>
    <dbReference type="NCBI Taxonomy" id="9606"/>
    <lineage>
        <taxon>Eukaryota</taxon>
        <taxon>Metazoa</taxon>
        <taxon>Chordata</taxon>
        <taxon>Craniata</taxon>
        <taxon>Vertebrata</taxon>
        <taxon>Euteleostomi</taxon>
        <taxon>Mammalia</taxon>
        <taxon>Eutheria</taxon>
        <taxon>Euarchontoglires</taxon>
        <taxon>Primates</taxon>
        <taxon>Haplorrhini</taxon>
        <taxon>Catarrhini</taxon>
        <taxon>Hominidae</taxon>
        <taxon>Homo</taxon>
    </lineage>
</organism>
<protein>
    <recommendedName>
        <fullName evidence="24">CX3C chemokine receptor 1</fullName>
        <shortName evidence="24">C-X3-C CKR-1</shortName>
        <shortName evidence="24">CX3CR1</shortName>
    </recommendedName>
    <alternativeName>
        <fullName evidence="27">Beta chemokine receptor-like 1</fullName>
        <shortName evidence="27">CMK-BRL-1</shortName>
        <shortName evidence="27">CMK-BRL1</shortName>
    </alternativeName>
    <alternativeName>
        <fullName evidence="28">Fractalkine receptor</fullName>
    </alternativeName>
    <alternativeName>
        <fullName>G-protein coupled receptor 13</fullName>
    </alternativeName>
    <alternativeName>
        <fullName evidence="26">V28</fullName>
    </alternativeName>
</protein>
<evidence type="ECO:0000250" key="1">
    <source>
        <dbReference type="UniProtKB" id="P35411"/>
    </source>
</evidence>
<evidence type="ECO:0000250" key="2">
    <source>
        <dbReference type="UniProtKB" id="Q9Z0D9"/>
    </source>
</evidence>
<evidence type="ECO:0000255" key="3"/>
<evidence type="ECO:0000255" key="4">
    <source>
        <dbReference type="PROSITE-ProRule" id="PRU00521"/>
    </source>
</evidence>
<evidence type="ECO:0000269" key="5">
    <source>
    </source>
</evidence>
<evidence type="ECO:0000269" key="6">
    <source>
    </source>
</evidence>
<evidence type="ECO:0000269" key="7">
    <source>
    </source>
</evidence>
<evidence type="ECO:0000269" key="8">
    <source>
    </source>
</evidence>
<evidence type="ECO:0000269" key="9">
    <source>
    </source>
</evidence>
<evidence type="ECO:0000269" key="10">
    <source>
    </source>
</evidence>
<evidence type="ECO:0000269" key="11">
    <source>
    </source>
</evidence>
<evidence type="ECO:0000269" key="12">
    <source>
    </source>
</evidence>
<evidence type="ECO:0000269" key="13">
    <source>
    </source>
</evidence>
<evidence type="ECO:0000269" key="14">
    <source>
    </source>
</evidence>
<evidence type="ECO:0000269" key="15">
    <source>
    </source>
</evidence>
<evidence type="ECO:0000269" key="16">
    <source>
    </source>
</evidence>
<evidence type="ECO:0000269" key="17">
    <source>
    </source>
</evidence>
<evidence type="ECO:0000269" key="18">
    <source>
    </source>
</evidence>
<evidence type="ECO:0000269" key="19">
    <source>
    </source>
</evidence>
<evidence type="ECO:0000269" key="20">
    <source>
    </source>
</evidence>
<evidence type="ECO:0000269" key="21">
    <source>
    </source>
</evidence>
<evidence type="ECO:0000269" key="22">
    <source>
    </source>
</evidence>
<evidence type="ECO:0000269" key="23">
    <source ref="6"/>
</evidence>
<evidence type="ECO:0000303" key="24">
    <source>
    </source>
</evidence>
<evidence type="ECO:0000303" key="25">
    <source>
    </source>
</evidence>
<evidence type="ECO:0000303" key="26">
    <source>
    </source>
</evidence>
<evidence type="ECO:0000303" key="27">
    <source>
    </source>
</evidence>
<evidence type="ECO:0000303" key="28">
    <source>
    </source>
</evidence>
<evidence type="ECO:0000305" key="29"/>
<evidence type="ECO:0000312" key="30">
    <source>
        <dbReference type="HGNC" id="HGNC:2558"/>
    </source>
</evidence>
<evidence type="ECO:0007829" key="31">
    <source>
        <dbReference type="PDB" id="7XBW"/>
    </source>
</evidence>
<evidence type="ECO:0007829" key="32">
    <source>
        <dbReference type="PDB" id="7XBX"/>
    </source>
</evidence>
<proteinExistence type="evidence at protein level"/>
<keyword id="KW-0002">3D-structure</keyword>
<keyword id="KW-1064">Adaptive immunity</keyword>
<keyword id="KW-0913">Age-related macular degeneration</keyword>
<keyword id="KW-0025">Alternative splicing</keyword>
<keyword id="KW-1003">Cell membrane</keyword>
<keyword id="KW-1015">Disulfide bond</keyword>
<keyword id="KW-0297">G-protein coupled receptor</keyword>
<keyword id="KW-0945">Host-virus interaction</keyword>
<keyword id="KW-0391">Immunity</keyword>
<keyword id="KW-0395">Inflammatory response</keyword>
<keyword id="KW-0399">Innate immunity</keyword>
<keyword id="KW-0472">Membrane</keyword>
<keyword id="KW-0597">Phosphoprotein</keyword>
<keyword id="KW-1267">Proteomics identification</keyword>
<keyword id="KW-0675">Receptor</keyword>
<keyword id="KW-1185">Reference proteome</keyword>
<keyword id="KW-0807">Transducer</keyword>
<keyword id="KW-0812">Transmembrane</keyword>
<keyword id="KW-1133">Transmembrane helix</keyword>
<gene>
    <name evidence="24 30" type="primary">CX3CR1</name>
    <name evidence="27" type="synonym">CMKBRL1</name>
    <name type="synonym">GPR13</name>
</gene>
<name>CX3C1_HUMAN</name>
<feature type="chain" id="PRO_0000069326" description="CX3C chemokine receptor 1">
    <location>
        <begin position="1"/>
        <end position="355"/>
    </location>
</feature>
<feature type="topological domain" description="Extracellular" evidence="3">
    <location>
        <begin position="1"/>
        <end position="31"/>
    </location>
</feature>
<feature type="transmembrane region" description="Helical; Name=1" evidence="3">
    <location>
        <begin position="32"/>
        <end position="59"/>
    </location>
</feature>
<feature type="topological domain" description="Cytoplasmic" evidence="3">
    <location>
        <begin position="60"/>
        <end position="69"/>
    </location>
</feature>
<feature type="transmembrane region" description="Helical; Name=2" evidence="3">
    <location>
        <begin position="70"/>
        <end position="90"/>
    </location>
</feature>
<feature type="topological domain" description="Extracellular" evidence="3">
    <location>
        <begin position="91"/>
        <end position="103"/>
    </location>
</feature>
<feature type="transmembrane region" description="Helical; Name=3" evidence="3">
    <location>
        <begin position="104"/>
        <end position="125"/>
    </location>
</feature>
<feature type="topological domain" description="Cytoplasmic" evidence="3">
    <location>
        <begin position="126"/>
        <end position="142"/>
    </location>
</feature>
<feature type="transmembrane region" description="Helical; Name=4" evidence="3">
    <location>
        <begin position="143"/>
        <end position="167"/>
    </location>
</feature>
<feature type="topological domain" description="Extracellular" evidence="3">
    <location>
        <begin position="168"/>
        <end position="195"/>
    </location>
</feature>
<feature type="transmembrane region" description="Helical; Name=5" evidence="3">
    <location>
        <begin position="196"/>
        <end position="215"/>
    </location>
</feature>
<feature type="topological domain" description="Cytoplasmic" evidence="3">
    <location>
        <begin position="216"/>
        <end position="231"/>
    </location>
</feature>
<feature type="transmembrane region" description="Helical; Name=6" evidence="3">
    <location>
        <begin position="232"/>
        <end position="256"/>
    </location>
</feature>
<feature type="topological domain" description="Extracellular" evidence="3">
    <location>
        <begin position="257"/>
        <end position="273"/>
    </location>
</feature>
<feature type="transmembrane region" description="Helical; Name=7" evidence="3">
    <location>
        <begin position="274"/>
        <end position="297"/>
    </location>
</feature>
<feature type="topological domain" description="Cytoplasmic" evidence="3">
    <location>
        <begin position="298"/>
        <end position="355"/>
    </location>
</feature>
<feature type="modified residue" description="Phosphothreonine" evidence="2">
    <location>
        <position position="346"/>
    </location>
</feature>
<feature type="disulfide bond" evidence="4">
    <location>
        <begin position="102"/>
        <end position="175"/>
    </location>
</feature>
<feature type="splice variant" id="VSP_009681" description="In isoform 2." evidence="29">
    <original>M</original>
    <variation>MREPLEALKLADLDFRKSSLASGWRMASGAFTM</variation>
    <location>
        <position position="1"/>
    </location>
</feature>
<feature type="splice variant" id="VSP_009682" description="In isoform 3." evidence="29">
    <original>M</original>
    <variation>MASGAFTM</variation>
    <location>
        <position position="1"/>
    </location>
</feature>
<feature type="splice variant" id="VSP_044595" description="In isoform 4." evidence="25">
    <original>M</original>
    <variation>MREPLEAFKLADLDFRKSSLASGWRMASGAFTM</variation>
    <location>
        <position position="1"/>
    </location>
</feature>
<feature type="sequence variant" id="VAR_049386" description="In dbSNP:rs41535248." evidence="23">
    <original>E</original>
    <variation>D</variation>
    <location>
        <position position="13"/>
    </location>
</feature>
<feature type="sequence variant" id="VAR_010041" description="In dbSNP:rs199811198." evidence="5">
    <original>T</original>
    <variation>A</variation>
    <location>
        <position position="57"/>
    </location>
</feature>
<feature type="sequence variant" id="VAR_010042" description="In dbSNP:rs143001773." evidence="5">
    <original>V</original>
    <variation>I</variation>
    <location>
        <position position="122"/>
    </location>
</feature>
<feature type="sequence variant" id="VAR_022062" description="In dbSNP:rs3732380.">
    <original>V</original>
    <variation>I</variation>
    <location>
        <position position="147"/>
    </location>
</feature>
<feature type="sequence variant" id="VAR_010043" description="Probable protective factor against acute coronary artery disease; probable risk factor for ARMD12; chemotaxis of monocytes of individuals with homozygous Ile-249 and Met-280 genotypes is impaired in the presence of bound CX3CR1 protein; dbSNP:rs3732379." evidence="5 6 11 12 13 23">
    <original>V</original>
    <variation>I</variation>
    <location>
        <position position="249"/>
    </location>
</feature>
<feature type="sequence variant" id="VAR_010044" description="Probable risk factor for ARMD12; impaired antifungal innate immune response; chemotaxis of monocytes of individuals with homozygous Met-280 and Ile-249 genotypes is impaired in the presence of bound CX3CR1 protein; dbSNP:rs3732378." evidence="5 11 12 13 18 23">
    <original>T</original>
    <variation>M</variation>
    <location>
        <position position="280"/>
    </location>
</feature>
<feature type="helix" evidence="31">
    <location>
        <begin position="31"/>
        <end position="56"/>
    </location>
</feature>
<feature type="strand" evidence="31">
    <location>
        <begin position="58"/>
        <end position="61"/>
    </location>
</feature>
<feature type="helix" evidence="31">
    <location>
        <begin position="65"/>
        <end position="91"/>
    </location>
</feature>
<feature type="helix" evidence="31">
    <location>
        <begin position="99"/>
        <end position="131"/>
    </location>
</feature>
<feature type="helix" evidence="31">
    <location>
        <begin position="134"/>
        <end position="139"/>
    </location>
</feature>
<feature type="turn" evidence="31">
    <location>
        <begin position="142"/>
        <end position="144"/>
    </location>
</feature>
<feature type="helix" evidence="31">
    <location>
        <begin position="146"/>
        <end position="161"/>
    </location>
</feature>
<feature type="helix" evidence="31">
    <location>
        <begin position="162"/>
        <end position="164"/>
    </location>
</feature>
<feature type="turn" evidence="31">
    <location>
        <begin position="165"/>
        <end position="167"/>
    </location>
</feature>
<feature type="strand" evidence="32">
    <location>
        <begin position="172"/>
        <end position="176"/>
    </location>
</feature>
<feature type="helix" evidence="31">
    <location>
        <begin position="181"/>
        <end position="184"/>
    </location>
</feature>
<feature type="helix" evidence="31">
    <location>
        <begin position="187"/>
        <end position="200"/>
    </location>
</feature>
<feature type="helix" evidence="31">
    <location>
        <begin position="202"/>
        <end position="220"/>
    </location>
</feature>
<feature type="turn" evidence="31">
    <location>
        <begin position="224"/>
        <end position="226"/>
    </location>
</feature>
<feature type="helix" evidence="31">
    <location>
        <begin position="228"/>
        <end position="258"/>
    </location>
</feature>
<feature type="helix" evidence="31">
    <location>
        <begin position="267"/>
        <end position="288"/>
    </location>
</feature>
<feature type="turn" evidence="31">
    <location>
        <begin position="289"/>
        <end position="291"/>
    </location>
</feature>
<feature type="helix" evidence="31">
    <location>
        <begin position="292"/>
        <end position="296"/>
    </location>
</feature>
<feature type="helix" evidence="31">
    <location>
        <begin position="298"/>
        <end position="309"/>
    </location>
</feature>
<feature type="sequence conflict" description="In Ref. 4; DA413545." evidence="29" ref="4">
    <original>F</original>
    <variation>L</variation>
    <location sequence="P49238-4">
        <position position="8"/>
    </location>
</feature>
<accession>P49238</accession>
<accession>A0N0N6</accession>
<accession>B2R5Z4</accession>
<accession>J3KP17</accession>